<protein>
    <recommendedName>
        <fullName>Sperm acrosome developmental regulator</fullName>
    </recommendedName>
</protein>
<feature type="chain" id="PRO_0000325783" description="Sperm acrosome developmental regulator">
    <location>
        <begin position="1"/>
        <end position="200"/>
    </location>
</feature>
<feature type="region of interest" description="Disordered" evidence="2">
    <location>
        <begin position="167"/>
        <end position="200"/>
    </location>
</feature>
<feature type="compositionally biased region" description="Basic residues" evidence="2">
    <location>
        <begin position="167"/>
        <end position="183"/>
    </location>
</feature>
<feature type="compositionally biased region" description="Basic and acidic residues" evidence="2">
    <location>
        <begin position="184"/>
        <end position="200"/>
    </location>
</feature>
<feature type="modified residue" description="Phosphoserine" evidence="3">
    <location>
        <position position="63"/>
    </location>
</feature>
<reference key="1">
    <citation type="journal article" date="2004" name="Genome Res.">
        <title>The status, quality, and expansion of the NIH full-length cDNA project: the Mammalian Gene Collection (MGC).</title>
        <authorList>
            <consortium name="The MGC Project Team"/>
        </authorList>
    </citation>
    <scope>NUCLEOTIDE SEQUENCE [LARGE SCALE MRNA]</scope>
    <source>
        <tissue>Testis</tissue>
    </source>
</reference>
<reference key="2">
    <citation type="journal article" date="2012" name="Nat. Commun.">
        <title>Quantitative maps of protein phosphorylation sites across 14 different rat organs and tissues.</title>
        <authorList>
            <person name="Lundby A."/>
            <person name="Secher A."/>
            <person name="Lage K."/>
            <person name="Nordsborg N.B."/>
            <person name="Dmytriyev A."/>
            <person name="Lundby C."/>
            <person name="Olsen J.V."/>
        </authorList>
    </citation>
    <scope>PHOSPHORYLATION [LARGE SCALE ANALYSIS] AT SER-63</scope>
    <scope>IDENTIFICATION BY MASS SPECTROMETRY [LARGE SCALE ANALYSIS]</scope>
</reference>
<organism>
    <name type="scientific">Rattus norvegicus</name>
    <name type="common">Rat</name>
    <dbReference type="NCBI Taxonomy" id="10116"/>
    <lineage>
        <taxon>Eukaryota</taxon>
        <taxon>Metazoa</taxon>
        <taxon>Chordata</taxon>
        <taxon>Craniata</taxon>
        <taxon>Vertebrata</taxon>
        <taxon>Euteleostomi</taxon>
        <taxon>Mammalia</taxon>
        <taxon>Eutheria</taxon>
        <taxon>Euarchontoglires</taxon>
        <taxon>Glires</taxon>
        <taxon>Rodentia</taxon>
        <taxon>Myomorpha</taxon>
        <taxon>Muroidea</taxon>
        <taxon>Muridae</taxon>
        <taxon>Murinae</taxon>
        <taxon>Rattus</taxon>
    </lineage>
</organism>
<sequence length="200" mass="23486">MRFLRWIRQIWRKVPNWVLFWKHLAKPGLSDQREKHLLKGPEKTSKDFDTVKLANAQKEDMVSDLDVCPGVLRSVKERSPLHDRESRSSRDSRSLMTVVNSVSTFMFSVLQSGWRLCRWKSSMSTGKVSSHTRTGSALGTPEAEMLREVYLVLWVIRKQLRELARRQERRRRRRMRSHASHTSRHSESVQGLKHDARSPL</sequence>
<gene>
    <name type="primary">Spacdr</name>
</gene>
<accession>Q6AY52</accession>
<dbReference type="EMBL" id="BC079190">
    <property type="protein sequence ID" value="AAH79190.1"/>
    <property type="molecule type" value="mRNA"/>
</dbReference>
<dbReference type="RefSeq" id="NP_001258165.1">
    <property type="nucleotide sequence ID" value="NM_001271236.1"/>
</dbReference>
<dbReference type="RefSeq" id="XP_017453988.1">
    <property type="nucleotide sequence ID" value="XM_017598499.1"/>
</dbReference>
<dbReference type="SMR" id="Q6AY52"/>
<dbReference type="FunCoup" id="Q6AY52">
    <property type="interactions" value="4"/>
</dbReference>
<dbReference type="STRING" id="10116.ENSRNOP00000056351"/>
<dbReference type="iPTMnet" id="Q6AY52"/>
<dbReference type="PhosphoSitePlus" id="Q6AY52"/>
<dbReference type="PaxDb" id="10116-ENSRNOP00000001869"/>
<dbReference type="GeneID" id="100362783"/>
<dbReference type="KEGG" id="rno:100362783"/>
<dbReference type="UCSC" id="RGD:1584380">
    <property type="organism name" value="rat"/>
</dbReference>
<dbReference type="AGR" id="RGD:11442159"/>
<dbReference type="CTD" id="402573"/>
<dbReference type="RGD" id="11442159">
    <property type="gene designation" value="Spacdr"/>
</dbReference>
<dbReference type="VEuPathDB" id="HostDB:ENSRNOG00000050805"/>
<dbReference type="eggNOG" id="ENOG502TM6R">
    <property type="taxonomic scope" value="Eukaryota"/>
</dbReference>
<dbReference type="HOGENOM" id="CLU_1360014_0_0_1"/>
<dbReference type="InParanoid" id="Q6AY52"/>
<dbReference type="OrthoDB" id="83429at9989"/>
<dbReference type="PRO" id="PR:Q6AY52"/>
<dbReference type="Proteomes" id="UP000002494">
    <property type="component" value="Chromosome 12"/>
</dbReference>
<dbReference type="Bgee" id="ENSRNOG00000024616">
    <property type="expression patterns" value="Expressed in heart and 19 other cell types or tissues"/>
</dbReference>
<dbReference type="ExpressionAtlas" id="Q6AY52">
    <property type="expression patterns" value="baseline and differential"/>
</dbReference>
<dbReference type="GO" id="GO:0001669">
    <property type="term" value="C:acrosomal vesicle"/>
    <property type="evidence" value="ECO:0000250"/>
    <property type="project" value="UniProtKB"/>
</dbReference>
<dbReference type="GO" id="GO:0007286">
    <property type="term" value="P:spermatid development"/>
    <property type="evidence" value="ECO:0000250"/>
    <property type="project" value="UniProtKB"/>
</dbReference>
<dbReference type="InterPro" id="IPR031534">
    <property type="entry name" value="SPACDR"/>
</dbReference>
<dbReference type="PANTHER" id="PTHR39221">
    <property type="entry name" value="CHROMOSOME 7 OPEN READING FRAME 61"/>
    <property type="match status" value="1"/>
</dbReference>
<dbReference type="PANTHER" id="PTHR39221:SF1">
    <property type="entry name" value="SPERM ACROSOME DEVELOPMENTAL REGULATOR"/>
    <property type="match status" value="1"/>
</dbReference>
<dbReference type="Pfam" id="PF15775">
    <property type="entry name" value="DUF4703"/>
    <property type="match status" value="1"/>
</dbReference>
<proteinExistence type="evidence at protein level"/>
<name>SACDR_RAT</name>
<keyword id="KW-0968">Cytoplasmic vesicle</keyword>
<keyword id="KW-0221">Differentiation</keyword>
<keyword id="KW-0597">Phosphoprotein</keyword>
<keyword id="KW-1185">Reference proteome</keyword>
<keyword id="KW-0744">Spermatogenesis</keyword>
<comment type="function">
    <text evidence="1">May play an important role in acrosome formation and nucleus shaping during spermiogenesis.</text>
</comment>
<comment type="subcellular location">
    <subcellularLocation>
        <location evidence="1">Cytoplasmic vesicle</location>
        <location evidence="1">Secretory vesicle</location>
        <location evidence="1">Acrosome</location>
    </subcellularLocation>
    <text evidence="1">Detected in acrosome of round spermatids and spermatozoa.</text>
</comment>
<evidence type="ECO:0000250" key="1">
    <source>
        <dbReference type="UniProtKB" id="Q8IZ16"/>
    </source>
</evidence>
<evidence type="ECO:0000256" key="2">
    <source>
        <dbReference type="SAM" id="MobiDB-lite"/>
    </source>
</evidence>
<evidence type="ECO:0007744" key="3">
    <source>
    </source>
</evidence>